<organism>
    <name type="scientific">Bovine ephemeral fever virus (strain BB7721)</name>
    <name type="common">BEFV</name>
    <dbReference type="NCBI Taxonomy" id="928297"/>
    <lineage>
        <taxon>Viruses</taxon>
        <taxon>Riboviria</taxon>
        <taxon>Orthornavirae</taxon>
        <taxon>Negarnaviricota</taxon>
        <taxon>Haploviricotina</taxon>
        <taxon>Monjiviricetes</taxon>
        <taxon>Mononegavirales</taxon>
        <taxon>Rhabdoviridae</taxon>
        <taxon>Alpharhabdovirinae</taxon>
        <taxon>Ephemerovirus</taxon>
        <taxon>Ephemerovirus febris</taxon>
    </lineage>
</organism>
<organismHost>
    <name type="scientific">Bos taurus</name>
    <name type="common">Bovine</name>
    <dbReference type="NCBI Taxonomy" id="9913"/>
</organismHost>
<organismHost>
    <name type="scientific">Bubalus bubalis</name>
    <name type="common">Domestic water buffalo</name>
    <dbReference type="NCBI Taxonomy" id="89462"/>
</organismHost>
<organismHost>
    <name type="scientific">Culicoides</name>
    <dbReference type="NCBI Taxonomy" id="58271"/>
</organismHost>
<organismHost>
    <name type="scientific">Syncerus caffer</name>
    <name type="common">African buffalo</name>
    <dbReference type="NCBI Taxonomy" id="9970"/>
</organismHost>
<dbReference type="EMBL" id="U18106">
    <property type="protein sequence ID" value="AAB63052.1"/>
    <property type="molecule type" value="Genomic_RNA"/>
</dbReference>
<dbReference type="EMBL" id="AF234533">
    <property type="protein sequence ID" value="AAG10419.1"/>
    <property type="molecule type" value="Genomic_DNA"/>
</dbReference>
<dbReference type="RefSeq" id="NP_065408.1">
    <property type="nucleotide sequence ID" value="NC_002526.1"/>
</dbReference>
<dbReference type="KEGG" id="vg:911733"/>
<dbReference type="Proteomes" id="UP000008588">
    <property type="component" value="Segment"/>
</dbReference>
<accession>Q65479</accession>
<proteinExistence type="predicted"/>
<protein>
    <recommendedName>
        <fullName>Protein gamma</fullName>
    </recommendedName>
</protein>
<keyword id="KW-1185">Reference proteome</keyword>
<reference key="1">
    <citation type="journal article" date="1997" name="J. Gen. Virol.">
        <title>Genome organization and transcription strategy in the complex GNS-L intergenic region of bovine ephemeral fever rhabdovirus.</title>
        <authorList>
            <person name="McWilliam S.M."/>
            <person name="Kongsuwan K."/>
            <person name="Cowley J.A."/>
            <person name="Byrne K.A."/>
            <person name="Walker P.J."/>
        </authorList>
    </citation>
    <scope>NUCLEOTIDE SEQUENCE [GENOMIC RNA]</scope>
</reference>
<feature type="chain" id="PRO_0000299225" description="Protein gamma">
    <location>
        <begin position="1"/>
        <end position="114"/>
    </location>
</feature>
<sequence length="114" mass="13467">MDLKFRCLIKNVADGRAGEIIVEECLEIIEQKYLRLMTIDLKEIRSSMFDQESNPWVYVFGKIYISGLMGRAIGKRMVKRGTYRIKEGELINHFEGVHIHFYKDIEKIFHSIRV</sequence>
<name>VPG_BEFVB</name>
<gene>
    <name type="primary">gamma</name>
</gene>